<feature type="chain" id="PRO_1000065967" description="Alanine racemase">
    <location>
        <begin position="1"/>
        <end position="374"/>
    </location>
</feature>
<feature type="active site" description="Proton acceptor; specific for D-alanine" evidence="1">
    <location>
        <position position="34"/>
    </location>
</feature>
<feature type="active site" description="Proton acceptor; specific for L-alanine" evidence="1">
    <location>
        <position position="271"/>
    </location>
</feature>
<feature type="binding site" evidence="1">
    <location>
        <position position="147"/>
    </location>
    <ligand>
        <name>substrate</name>
    </ligand>
</feature>
<feature type="binding site" evidence="1">
    <location>
        <position position="319"/>
    </location>
    <ligand>
        <name>substrate</name>
    </ligand>
</feature>
<feature type="modified residue" description="N6-(pyridoxal phosphate)lysine" evidence="1">
    <location>
        <position position="34"/>
    </location>
</feature>
<accession>A3MYX4</accession>
<evidence type="ECO:0000255" key="1">
    <source>
        <dbReference type="HAMAP-Rule" id="MF_01201"/>
    </source>
</evidence>
<keyword id="KW-0413">Isomerase</keyword>
<keyword id="KW-0663">Pyridoxal phosphate</keyword>
<keyword id="KW-1185">Reference proteome</keyword>
<proteinExistence type="inferred from homology"/>
<name>ALR_ACTP2</name>
<reference key="1">
    <citation type="journal article" date="2008" name="J. Bacteriol.">
        <title>The complete genome sequence of Actinobacillus pleuropneumoniae L20 (serotype 5b).</title>
        <authorList>
            <person name="Foote S.J."/>
            <person name="Bosse J.T."/>
            <person name="Bouevitch A.B."/>
            <person name="Langford P.R."/>
            <person name="Young N.M."/>
            <person name="Nash J.H.E."/>
        </authorList>
    </citation>
    <scope>NUCLEOTIDE SEQUENCE [LARGE SCALE GENOMIC DNA]</scope>
    <source>
        <strain>L20</strain>
    </source>
</reference>
<dbReference type="EC" id="5.1.1.1" evidence="1"/>
<dbReference type="EMBL" id="CP000569">
    <property type="protein sequence ID" value="ABN73360.1"/>
    <property type="molecule type" value="Genomic_DNA"/>
</dbReference>
<dbReference type="RefSeq" id="WP_011848339.1">
    <property type="nucleotide sequence ID" value="NC_009053.1"/>
</dbReference>
<dbReference type="SMR" id="A3MYX4"/>
<dbReference type="STRING" id="416269.APL_0252"/>
<dbReference type="EnsemblBacteria" id="ABN73360">
    <property type="protein sequence ID" value="ABN73360"/>
    <property type="gene ID" value="APL_0252"/>
</dbReference>
<dbReference type="KEGG" id="apl:APL_0252"/>
<dbReference type="PATRIC" id="fig|416269.6.peg.258"/>
<dbReference type="eggNOG" id="COG0787">
    <property type="taxonomic scope" value="Bacteria"/>
</dbReference>
<dbReference type="HOGENOM" id="CLU_028393_1_0_6"/>
<dbReference type="UniPathway" id="UPA00042">
    <property type="reaction ID" value="UER00497"/>
</dbReference>
<dbReference type="Proteomes" id="UP000001432">
    <property type="component" value="Chromosome"/>
</dbReference>
<dbReference type="GO" id="GO:0005829">
    <property type="term" value="C:cytosol"/>
    <property type="evidence" value="ECO:0007669"/>
    <property type="project" value="TreeGrafter"/>
</dbReference>
<dbReference type="GO" id="GO:0008784">
    <property type="term" value="F:alanine racemase activity"/>
    <property type="evidence" value="ECO:0007669"/>
    <property type="project" value="UniProtKB-UniRule"/>
</dbReference>
<dbReference type="GO" id="GO:0030170">
    <property type="term" value="F:pyridoxal phosphate binding"/>
    <property type="evidence" value="ECO:0007669"/>
    <property type="project" value="UniProtKB-UniRule"/>
</dbReference>
<dbReference type="GO" id="GO:0030632">
    <property type="term" value="P:D-alanine biosynthetic process"/>
    <property type="evidence" value="ECO:0007669"/>
    <property type="project" value="UniProtKB-UniRule"/>
</dbReference>
<dbReference type="CDD" id="cd06827">
    <property type="entry name" value="PLPDE_III_AR_proteobact"/>
    <property type="match status" value="1"/>
</dbReference>
<dbReference type="FunFam" id="2.40.37.10:FF:000002">
    <property type="entry name" value="Alanine racemase"/>
    <property type="match status" value="1"/>
</dbReference>
<dbReference type="FunFam" id="3.20.20.10:FF:000002">
    <property type="entry name" value="Alanine racemase"/>
    <property type="match status" value="1"/>
</dbReference>
<dbReference type="Gene3D" id="3.20.20.10">
    <property type="entry name" value="Alanine racemase"/>
    <property type="match status" value="1"/>
</dbReference>
<dbReference type="Gene3D" id="2.40.37.10">
    <property type="entry name" value="Lyase, Ornithine Decarboxylase, Chain A, domain 1"/>
    <property type="match status" value="1"/>
</dbReference>
<dbReference type="HAMAP" id="MF_01201">
    <property type="entry name" value="Ala_racemase"/>
    <property type="match status" value="1"/>
</dbReference>
<dbReference type="InterPro" id="IPR000821">
    <property type="entry name" value="Ala_racemase"/>
</dbReference>
<dbReference type="InterPro" id="IPR009006">
    <property type="entry name" value="Ala_racemase/Decarboxylase_C"/>
</dbReference>
<dbReference type="InterPro" id="IPR011079">
    <property type="entry name" value="Ala_racemase_C"/>
</dbReference>
<dbReference type="InterPro" id="IPR001608">
    <property type="entry name" value="Ala_racemase_N"/>
</dbReference>
<dbReference type="InterPro" id="IPR029066">
    <property type="entry name" value="PLP-binding_barrel"/>
</dbReference>
<dbReference type="NCBIfam" id="TIGR00492">
    <property type="entry name" value="alr"/>
    <property type="match status" value="1"/>
</dbReference>
<dbReference type="PANTHER" id="PTHR30511">
    <property type="entry name" value="ALANINE RACEMASE"/>
    <property type="match status" value="1"/>
</dbReference>
<dbReference type="PANTHER" id="PTHR30511:SF4">
    <property type="entry name" value="ALANINE RACEMASE, BIOSYNTHETIC"/>
    <property type="match status" value="1"/>
</dbReference>
<dbReference type="Pfam" id="PF00842">
    <property type="entry name" value="Ala_racemase_C"/>
    <property type="match status" value="1"/>
</dbReference>
<dbReference type="Pfam" id="PF01168">
    <property type="entry name" value="Ala_racemase_N"/>
    <property type="match status" value="1"/>
</dbReference>
<dbReference type="PRINTS" id="PR00992">
    <property type="entry name" value="ALARACEMASE"/>
</dbReference>
<dbReference type="SMART" id="SM01005">
    <property type="entry name" value="Ala_racemase_C"/>
    <property type="match status" value="1"/>
</dbReference>
<dbReference type="SUPFAM" id="SSF50621">
    <property type="entry name" value="Alanine racemase C-terminal domain-like"/>
    <property type="match status" value="1"/>
</dbReference>
<dbReference type="SUPFAM" id="SSF51419">
    <property type="entry name" value="PLP-binding barrel"/>
    <property type="match status" value="1"/>
</dbReference>
<protein>
    <recommendedName>
        <fullName evidence="1">Alanine racemase</fullName>
        <ecNumber evidence="1">5.1.1.1</ecNumber>
    </recommendedName>
</protein>
<sequence length="374" mass="42022">MKPATATISREALRHNIELIKTFAPQQKLLAMIKANAYGQGLLPAADTLADLVEGFGVARLREALEIQETGYTGKILLIEGFFDREELLKTLSRRFDTVIHCQEQLELLEQVAEEWQQEQQKGFWKRKAKIYFPINVWLKIDTGMHRLGVHPEQVDMFYQRLKACPLVESISFVSHFSRADEPDCGYTEKQIAIFEAATSPYPTHERSISASSGILYWKQAHYDWVRPGIIMHGISPHYTPITDLGFKPVMTLSSSLIAVRTHKAGEPVGYGGTWISDKDTKLGVVAMGYGDGYPRNAPEGTPVLVNGRIVPIVGRVSMDMLTVDLGADSQDKVGDEVIFWGKDLLIEEVAQHIGVISYELITKLTPRVIFEYE</sequence>
<organism>
    <name type="scientific">Actinobacillus pleuropneumoniae serotype 5b (strain L20)</name>
    <dbReference type="NCBI Taxonomy" id="416269"/>
    <lineage>
        <taxon>Bacteria</taxon>
        <taxon>Pseudomonadati</taxon>
        <taxon>Pseudomonadota</taxon>
        <taxon>Gammaproteobacteria</taxon>
        <taxon>Pasteurellales</taxon>
        <taxon>Pasteurellaceae</taxon>
        <taxon>Actinobacillus</taxon>
    </lineage>
</organism>
<gene>
    <name type="primary">alr</name>
    <name type="ordered locus">APL_0252</name>
</gene>
<comment type="function">
    <text evidence="1">Catalyzes the interconversion of L-alanine and D-alanine. May also act on other amino acids.</text>
</comment>
<comment type="catalytic activity">
    <reaction evidence="1">
        <text>L-alanine = D-alanine</text>
        <dbReference type="Rhea" id="RHEA:20249"/>
        <dbReference type="ChEBI" id="CHEBI:57416"/>
        <dbReference type="ChEBI" id="CHEBI:57972"/>
        <dbReference type="EC" id="5.1.1.1"/>
    </reaction>
</comment>
<comment type="cofactor">
    <cofactor evidence="1">
        <name>pyridoxal 5'-phosphate</name>
        <dbReference type="ChEBI" id="CHEBI:597326"/>
    </cofactor>
</comment>
<comment type="pathway">
    <text evidence="1">Amino-acid biosynthesis; D-alanine biosynthesis; D-alanine from L-alanine: step 1/1.</text>
</comment>
<comment type="similarity">
    <text evidence="1">Belongs to the alanine racemase family.</text>
</comment>